<keyword id="KW-0963">Cytoplasm</keyword>
<keyword id="KW-0349">Heme</keyword>
<keyword id="KW-0376">Hydrogen peroxide</keyword>
<keyword id="KW-0408">Iron</keyword>
<keyword id="KW-0479">Metal-binding</keyword>
<keyword id="KW-0560">Oxidoreductase</keyword>
<keyword id="KW-0575">Peroxidase</keyword>
<keyword id="KW-1185">Reference proteome</keyword>
<feature type="chain" id="PRO_0000345090" description="Catalase-peroxidase 1">
    <location>
        <begin position="1"/>
        <end position="750"/>
    </location>
</feature>
<feature type="region of interest" description="Disordered" evidence="2">
    <location>
        <begin position="199"/>
        <end position="218"/>
    </location>
</feature>
<feature type="compositionally biased region" description="Basic and acidic residues" evidence="2">
    <location>
        <begin position="200"/>
        <end position="218"/>
    </location>
</feature>
<feature type="active site" description="Proton acceptor" evidence="1">
    <location>
        <position position="91"/>
    </location>
</feature>
<feature type="binding site" description="axial binding residue" evidence="1">
    <location>
        <position position="279"/>
    </location>
    <ligand>
        <name>heme b</name>
        <dbReference type="ChEBI" id="CHEBI:60344"/>
    </ligand>
    <ligandPart>
        <name>Fe</name>
        <dbReference type="ChEBI" id="CHEBI:18248"/>
    </ligandPart>
</feature>
<feature type="site" description="Transition state stabilizer" evidence="1">
    <location>
        <position position="87"/>
    </location>
</feature>
<feature type="cross-link" description="Tryptophyl-tyrosyl-methioninium (Trp-Tyr) (with M-264)" evidence="1">
    <location>
        <begin position="90"/>
        <end position="238"/>
    </location>
</feature>
<feature type="cross-link" description="Tryptophyl-tyrosyl-methioninium (Tyr-Met) (with W-90)" evidence="1">
    <location>
        <begin position="238"/>
        <end position="264"/>
    </location>
</feature>
<gene>
    <name evidence="1" type="primary">katG1</name>
    <name type="synonym">MagKatG1</name>
    <name type="ORF">MGG_04337</name>
</gene>
<reference key="1">
    <citation type="journal article" date="2005" name="Nature">
        <title>The genome sequence of the rice blast fungus Magnaporthe grisea.</title>
        <authorList>
            <person name="Dean R.A."/>
            <person name="Talbot N.J."/>
            <person name="Ebbole D.J."/>
            <person name="Farman M.L."/>
            <person name="Mitchell T.K."/>
            <person name="Orbach M.J."/>
            <person name="Thon M.R."/>
            <person name="Kulkarni R."/>
            <person name="Xu J.-R."/>
            <person name="Pan H."/>
            <person name="Read N.D."/>
            <person name="Lee Y.-H."/>
            <person name="Carbone I."/>
            <person name="Brown D."/>
            <person name="Oh Y.Y."/>
            <person name="Donofrio N."/>
            <person name="Jeong J.S."/>
            <person name="Soanes D.M."/>
            <person name="Djonovic S."/>
            <person name="Kolomiets E."/>
            <person name="Rehmeyer C."/>
            <person name="Li W."/>
            <person name="Harding M."/>
            <person name="Kim S."/>
            <person name="Lebrun M.-H."/>
            <person name="Bohnert H."/>
            <person name="Coughlan S."/>
            <person name="Butler J."/>
            <person name="Calvo S.E."/>
            <person name="Ma L.-J."/>
            <person name="Nicol R."/>
            <person name="Purcell S."/>
            <person name="Nusbaum C."/>
            <person name="Galagan J.E."/>
            <person name="Birren B.W."/>
        </authorList>
    </citation>
    <scope>NUCLEOTIDE SEQUENCE [LARGE SCALE GENOMIC DNA]</scope>
    <source>
        <strain>70-15 / ATCC MYA-4617 / FGSC 8958</strain>
    </source>
</reference>
<reference key="2">
    <citation type="journal article" date="2008" name="Antioxid. Redox Signal.">
        <title>Evolution of catalases from bacteria to humans.</title>
        <authorList>
            <person name="Zamocky M."/>
            <person name="Furtmueller P.G."/>
            <person name="Obinger C."/>
        </authorList>
    </citation>
    <scope>GENE NAME</scope>
</reference>
<reference key="3">
    <citation type="journal article" date="2009" name="Biochem. J.">
        <title>Intracellular catalase/peroxidase from the phytopathogenic rice blast fungus Magnaporthe grisea: expression analysis and biochemical characterization of the recombinant protein.</title>
        <authorList>
            <person name="Zamocky M."/>
            <person name="Furtmuller P.G."/>
            <person name="Bellei M."/>
            <person name="Battistuzzi G."/>
            <person name="Stadlmann J."/>
            <person name="Vlasits J."/>
            <person name="Obinger C."/>
        </authorList>
    </citation>
    <scope>FUNCTION</scope>
    <scope>CATALYTIC ACTIVITY</scope>
    <scope>SUBUNIT</scope>
    <scope>COFACTOR</scope>
    <scope>BIOPHYSICOCHEMICAL PROPERTIES</scope>
</reference>
<name>KATG1_PYRO7</name>
<proteinExistence type="evidence at protein level"/>
<sequence length="750" mass="82859">MGECPLRTANVAGGGTRNRDWWPNTLKLNILRQHTEATNPYDPNFDYAEAFKSLDYEGLKKDLRALMTDSQEYWPADFGHYGGLFVRMAWHSAGTYRVMDGRGGGGQGQQRFAPLNSWPDNVSLDKARRLLWPIKQKYGNKISWADLMLLTGNVALEDMGFKTFGFAGGRPDTWEADESTYWGGETTWLGNEVRYSSGNEGHKESGVIDGSESKKGHKDIHTRDLEKPVSAAHMGLIYVNPEGPDGIPDPVAAARDIRTTFSRMAMNDEETVALIAGGHTVGKTHGAAPSDNVGPEPEAAPIENQGLGWSNKHGSGKGPDTITSGLEVIWTKEPAKFTMNYLEYLFKYEWELTKSPAGANQWVAKNAEEFIPDAFDPSKKHKPRMLTTDLSLRFDPEYEKISRRFLENPEQFKDAFARAWFKLLHRDMGPRSRWLGPEVPKETLLWEDPIPTPDHPIIDGSDVDSLKKAILATGVAPSKLIQTAWASASTFRGGDKRGGANGARIRLEPQNKWEVNNPQQLAEVLKALEGVKADFEKSGKKVSIADLIVLAGVAAVEQAAGVPVPFTPGRGDATQEQTDVESFTHLEPAADAFRNYGKGTSRVTTEQIMVDRAQQLTLTAPELTVLVGGLRVLGANYDGSSHGVWTDKPGKLTNDFFVTLLDPYTSWKSVDGEVFEGTNSKSGKKLTGTRADLVFGSHSELRALAEVYGSADGQQKFTKDFVAAWDKVMNLDRFDVRRGIYDETRLKSKL</sequence>
<evidence type="ECO:0000255" key="1">
    <source>
        <dbReference type="HAMAP-Rule" id="MF_03108"/>
    </source>
</evidence>
<evidence type="ECO:0000256" key="2">
    <source>
        <dbReference type="SAM" id="MobiDB-lite"/>
    </source>
</evidence>
<evidence type="ECO:0000269" key="3">
    <source>
    </source>
</evidence>
<accession>A4R5S9</accession>
<accession>G4NGE6</accession>
<protein>
    <recommendedName>
        <fullName evidence="1">Catalase-peroxidase 1</fullName>
        <shortName evidence="1">CP 1</shortName>
        <ecNumber evidence="1">1.11.1.21</ecNumber>
    </recommendedName>
    <alternativeName>
        <fullName evidence="1">Peroxidase/catalase 1</fullName>
    </alternativeName>
</protein>
<dbReference type="EC" id="1.11.1.21" evidence="1"/>
<dbReference type="EMBL" id="CM001236">
    <property type="protein sequence ID" value="EHA47103.1"/>
    <property type="molecule type" value="Genomic_DNA"/>
</dbReference>
<dbReference type="RefSeq" id="XP_003719470.1">
    <property type="nucleotide sequence ID" value="XM_003719422.1"/>
</dbReference>
<dbReference type="SMR" id="A4R5S9"/>
<dbReference type="STRING" id="242507.A4R5S9"/>
<dbReference type="PeroxiBase" id="2288">
    <property type="entry name" value="MgrCP01"/>
</dbReference>
<dbReference type="EnsemblFungi" id="MGG_04337T0">
    <property type="protein sequence ID" value="MGG_04337T0"/>
    <property type="gene ID" value="MGG_04337"/>
</dbReference>
<dbReference type="GeneID" id="2677580"/>
<dbReference type="KEGG" id="mgr:MGG_04337"/>
<dbReference type="VEuPathDB" id="FungiDB:MGG_04337"/>
<dbReference type="eggNOG" id="ENOG502QTDY">
    <property type="taxonomic scope" value="Eukaryota"/>
</dbReference>
<dbReference type="HOGENOM" id="CLU_025424_2_0_1"/>
<dbReference type="InParanoid" id="A4R5S9"/>
<dbReference type="OMA" id="GPETTWL"/>
<dbReference type="OrthoDB" id="407695at2759"/>
<dbReference type="BRENDA" id="1.11.1.21">
    <property type="organism ID" value="3152"/>
</dbReference>
<dbReference type="Proteomes" id="UP000009058">
    <property type="component" value="Chromosome 6"/>
</dbReference>
<dbReference type="GO" id="GO:0005829">
    <property type="term" value="C:cytosol"/>
    <property type="evidence" value="ECO:0007669"/>
    <property type="project" value="TreeGrafter"/>
</dbReference>
<dbReference type="GO" id="GO:0004096">
    <property type="term" value="F:catalase activity"/>
    <property type="evidence" value="ECO:0007669"/>
    <property type="project" value="UniProtKB-UniRule"/>
</dbReference>
<dbReference type="GO" id="GO:0020037">
    <property type="term" value="F:heme binding"/>
    <property type="evidence" value="ECO:0007669"/>
    <property type="project" value="InterPro"/>
</dbReference>
<dbReference type="GO" id="GO:0046872">
    <property type="term" value="F:metal ion binding"/>
    <property type="evidence" value="ECO:0007669"/>
    <property type="project" value="UniProtKB-KW"/>
</dbReference>
<dbReference type="GO" id="GO:0070301">
    <property type="term" value="P:cellular response to hydrogen peroxide"/>
    <property type="evidence" value="ECO:0007669"/>
    <property type="project" value="TreeGrafter"/>
</dbReference>
<dbReference type="GO" id="GO:0042744">
    <property type="term" value="P:hydrogen peroxide catabolic process"/>
    <property type="evidence" value="ECO:0007669"/>
    <property type="project" value="UniProtKB-KW"/>
</dbReference>
<dbReference type="CDD" id="cd00649">
    <property type="entry name" value="catalase_peroxidase_1"/>
    <property type="match status" value="1"/>
</dbReference>
<dbReference type="CDD" id="cd08200">
    <property type="entry name" value="catalase_peroxidase_2"/>
    <property type="match status" value="1"/>
</dbReference>
<dbReference type="FunFam" id="1.10.420.10:FF:000002">
    <property type="entry name" value="Catalase-peroxidase"/>
    <property type="match status" value="1"/>
</dbReference>
<dbReference type="FunFam" id="1.10.420.10:FF:000004">
    <property type="entry name" value="Catalase-peroxidase"/>
    <property type="match status" value="1"/>
</dbReference>
<dbReference type="FunFam" id="1.10.520.10:FF:000002">
    <property type="entry name" value="Catalase-peroxidase"/>
    <property type="match status" value="1"/>
</dbReference>
<dbReference type="Gene3D" id="1.10.520.10">
    <property type="match status" value="2"/>
</dbReference>
<dbReference type="Gene3D" id="1.10.420.10">
    <property type="entry name" value="Peroxidase, domain 2"/>
    <property type="match status" value="2"/>
</dbReference>
<dbReference type="HAMAP" id="MF_01961">
    <property type="entry name" value="Catal_peroxid"/>
    <property type="match status" value="1"/>
</dbReference>
<dbReference type="InterPro" id="IPR000763">
    <property type="entry name" value="Catalase_peroxidase"/>
</dbReference>
<dbReference type="InterPro" id="IPR002016">
    <property type="entry name" value="Haem_peroxidase"/>
</dbReference>
<dbReference type="InterPro" id="IPR010255">
    <property type="entry name" value="Haem_peroxidase_sf"/>
</dbReference>
<dbReference type="InterPro" id="IPR019794">
    <property type="entry name" value="Peroxidases_AS"/>
</dbReference>
<dbReference type="InterPro" id="IPR019793">
    <property type="entry name" value="Peroxidases_heam-ligand_BS"/>
</dbReference>
<dbReference type="NCBIfam" id="TIGR00198">
    <property type="entry name" value="cat_per_HPI"/>
    <property type="match status" value="1"/>
</dbReference>
<dbReference type="NCBIfam" id="NF011635">
    <property type="entry name" value="PRK15061.1"/>
    <property type="match status" value="1"/>
</dbReference>
<dbReference type="PANTHER" id="PTHR30555:SF0">
    <property type="entry name" value="CATALASE-PEROXIDASE"/>
    <property type="match status" value="1"/>
</dbReference>
<dbReference type="PANTHER" id="PTHR30555">
    <property type="entry name" value="HYDROPEROXIDASE I, BIFUNCTIONAL CATALASE-PEROXIDASE"/>
    <property type="match status" value="1"/>
</dbReference>
<dbReference type="Pfam" id="PF00141">
    <property type="entry name" value="peroxidase"/>
    <property type="match status" value="2"/>
</dbReference>
<dbReference type="PRINTS" id="PR00460">
    <property type="entry name" value="BPEROXIDASE"/>
</dbReference>
<dbReference type="PRINTS" id="PR00458">
    <property type="entry name" value="PEROXIDASE"/>
</dbReference>
<dbReference type="SUPFAM" id="SSF48113">
    <property type="entry name" value="Heme-dependent peroxidases"/>
    <property type="match status" value="2"/>
</dbReference>
<dbReference type="PROSITE" id="PS00435">
    <property type="entry name" value="PEROXIDASE_1"/>
    <property type="match status" value="1"/>
</dbReference>
<dbReference type="PROSITE" id="PS00436">
    <property type="entry name" value="PEROXIDASE_2"/>
    <property type="match status" value="1"/>
</dbReference>
<dbReference type="PROSITE" id="PS50873">
    <property type="entry name" value="PEROXIDASE_4"/>
    <property type="match status" value="1"/>
</dbReference>
<organism>
    <name type="scientific">Pyricularia oryzae (strain 70-15 / ATCC MYA-4617 / FGSC 8958)</name>
    <name type="common">Rice blast fungus</name>
    <name type="synonym">Magnaporthe oryzae</name>
    <dbReference type="NCBI Taxonomy" id="242507"/>
    <lineage>
        <taxon>Eukaryota</taxon>
        <taxon>Fungi</taxon>
        <taxon>Dikarya</taxon>
        <taxon>Ascomycota</taxon>
        <taxon>Pezizomycotina</taxon>
        <taxon>Sordariomycetes</taxon>
        <taxon>Sordariomycetidae</taxon>
        <taxon>Magnaporthales</taxon>
        <taxon>Pyriculariaceae</taxon>
        <taxon>Pyricularia</taxon>
    </lineage>
</organism>
<comment type="function">
    <text evidence="1 3">Bifunctional enzyme with both catalase and broad-spectrum peroxidase activity.</text>
</comment>
<comment type="catalytic activity">
    <reaction evidence="1 3">
        <text>H2O2 + AH2 = A + 2 H2O</text>
        <dbReference type="Rhea" id="RHEA:30275"/>
        <dbReference type="ChEBI" id="CHEBI:13193"/>
        <dbReference type="ChEBI" id="CHEBI:15377"/>
        <dbReference type="ChEBI" id="CHEBI:16240"/>
        <dbReference type="ChEBI" id="CHEBI:17499"/>
        <dbReference type="EC" id="1.11.1.21"/>
    </reaction>
</comment>
<comment type="catalytic activity">
    <reaction evidence="1 3">
        <text>2 H2O2 = O2 + 2 H2O</text>
        <dbReference type="Rhea" id="RHEA:20309"/>
        <dbReference type="ChEBI" id="CHEBI:15377"/>
        <dbReference type="ChEBI" id="CHEBI:15379"/>
        <dbReference type="ChEBI" id="CHEBI:16240"/>
        <dbReference type="EC" id="1.11.1.21"/>
    </reaction>
</comment>
<comment type="cofactor">
    <cofactor evidence="1 3">
        <name>heme b</name>
        <dbReference type="ChEBI" id="CHEBI:60344"/>
    </cofactor>
    <text evidence="1 3">Binds 1 heme b (iron(II)-protoporphyrin IX) group per monomer.</text>
</comment>
<comment type="biophysicochemical properties">
    <kinetics>
        <KM evidence="3">4.8 mM for H(2)O(2) for the catalase reaction</KM>
        <text>kcat is 7010 sec(-1) with H(2)O(2) as substrate.</text>
    </kinetics>
    <phDependence>
        <text evidence="3">Optimum pH is 6.0 for the catalase reaction.</text>
    </phDependence>
</comment>
<comment type="subunit">
    <text evidence="1 3">Homodimer or homotetramer. Predominantly homodimeric.</text>
</comment>
<comment type="subcellular location">
    <subcellularLocation>
        <location evidence="1">Cytoplasm</location>
    </subcellularLocation>
</comment>
<comment type="PTM">
    <text evidence="1">Formation of the three residue Trp-Tyr-Met cross-link is important for the catalase, but not the peroxidase activity of the enzyme.</text>
</comment>
<comment type="similarity">
    <text evidence="1">Belongs to the peroxidase family. Peroxidase/catalase subfamily.</text>
</comment>